<sequence>MADQTRTHHEMISRDSTQEAHPKARQMVKAATAVTAGGSLLVLSGLTLAGTVIALTVATPLLVIFSPVLVPAVVTVALIITGFLASGGFGIAAITAFSWLYRHMTGSGSDKIENARMKVGSRVQDTKYGQHNIGVQHQQVS</sequence>
<accession>Q43284</accession>
<organism>
    <name type="scientific">Arabidopsis thaliana</name>
    <name type="common">Mouse-ear cress</name>
    <dbReference type="NCBI Taxonomy" id="3702"/>
    <lineage>
        <taxon>Eukaryota</taxon>
        <taxon>Viridiplantae</taxon>
        <taxon>Streptophyta</taxon>
        <taxon>Embryophyta</taxon>
        <taxon>Tracheophyta</taxon>
        <taxon>Spermatophyta</taxon>
        <taxon>Magnoliopsida</taxon>
        <taxon>eudicotyledons</taxon>
        <taxon>Gunneridae</taxon>
        <taxon>Pentapetalae</taxon>
        <taxon>rosids</taxon>
        <taxon>malvids</taxon>
        <taxon>Brassicales</taxon>
        <taxon>Brassicaceae</taxon>
        <taxon>Camelineae</taxon>
        <taxon>Arabidopsis</taxon>
    </lineage>
</organism>
<evidence type="ECO:0000250" key="1"/>
<evidence type="ECO:0000255" key="2"/>
<evidence type="ECO:0000256" key="3">
    <source>
        <dbReference type="SAM" id="MobiDB-lite"/>
    </source>
</evidence>
<evidence type="ECO:0000269" key="4">
    <source>
    </source>
</evidence>
<evidence type="ECO:0000305" key="5"/>
<comment type="function">
    <text evidence="1">May have a structural role to stabilize the lipid body during desiccation of the seed by preventing coalescence of the oil. Probably interacts with both lipid and phospholipid moieties of lipid bodies. May also provide recognition signals for specific lipase anchorage in lipolysis during seedling growth (By similarity).</text>
</comment>
<comment type="subcellular location">
    <subcellularLocation>
        <location evidence="1">Lipid droplet</location>
    </subcellularLocation>
    <subcellularLocation>
        <location evidence="1">Membrane</location>
        <topology evidence="1">Multi-pass membrane protein</topology>
    </subcellularLocation>
    <text evidence="1">Surface of oil bodies. Oleosins exist at a monolayer lipid/water interface (By similarity).</text>
</comment>
<comment type="developmental stage">
    <text evidence="4">Expression peaks early in embryonic development and decreases during later stages.</text>
</comment>
<comment type="similarity">
    <text evidence="5">Belongs to the oleosin family.</text>
</comment>
<proteinExistence type="evidence at transcript level"/>
<dbReference type="EMBL" id="Z54165">
    <property type="protein sequence ID" value="CAA90878.2"/>
    <property type="molecule type" value="mRNA"/>
</dbReference>
<dbReference type="EMBL" id="AB023044">
    <property type="protein sequence ID" value="BAA97384.1"/>
    <property type="molecule type" value="Genomic_DNA"/>
</dbReference>
<dbReference type="EMBL" id="CP002688">
    <property type="protein sequence ID" value="AED96053.1"/>
    <property type="molecule type" value="Genomic_DNA"/>
</dbReference>
<dbReference type="EMBL" id="Z27008">
    <property type="protein sequence ID" value="CAA81561.1"/>
    <property type="molecule type" value="mRNA"/>
</dbReference>
<dbReference type="RefSeq" id="NP_199934.1">
    <property type="nucleotide sequence ID" value="NM_124500.4"/>
</dbReference>
<dbReference type="SMR" id="Q43284"/>
<dbReference type="BioGRID" id="20441">
    <property type="interactions" value="1"/>
</dbReference>
<dbReference type="FunCoup" id="Q43284">
    <property type="interactions" value="60"/>
</dbReference>
<dbReference type="STRING" id="3702.Q43284"/>
<dbReference type="GlyGen" id="Q43284">
    <property type="glycosylation" value="1 site"/>
</dbReference>
<dbReference type="PaxDb" id="3702-AT5G51210.1"/>
<dbReference type="ProteomicsDB" id="250965"/>
<dbReference type="EnsemblPlants" id="AT5G51210.1">
    <property type="protein sequence ID" value="AT5G51210.1"/>
    <property type="gene ID" value="AT5G51210"/>
</dbReference>
<dbReference type="GeneID" id="835196"/>
<dbReference type="Gramene" id="AT5G51210.1">
    <property type="protein sequence ID" value="AT5G51210.1"/>
    <property type="gene ID" value="AT5G51210"/>
</dbReference>
<dbReference type="KEGG" id="ath:AT5G51210"/>
<dbReference type="Araport" id="AT5G51210"/>
<dbReference type="TAIR" id="AT5G51210">
    <property type="gene designation" value="OLEO3"/>
</dbReference>
<dbReference type="eggNOG" id="ENOG502RZIP">
    <property type="taxonomic scope" value="Eukaryota"/>
</dbReference>
<dbReference type="HOGENOM" id="CLU_101983_2_0_1"/>
<dbReference type="InParanoid" id="Q43284"/>
<dbReference type="OMA" id="QHNIGVQ"/>
<dbReference type="OrthoDB" id="690239at2759"/>
<dbReference type="PhylomeDB" id="Q43284"/>
<dbReference type="PRO" id="PR:Q43284"/>
<dbReference type="Proteomes" id="UP000006548">
    <property type="component" value="Chromosome 5"/>
</dbReference>
<dbReference type="ExpressionAtlas" id="Q43284">
    <property type="expression patterns" value="baseline and differential"/>
</dbReference>
<dbReference type="GO" id="GO:0016020">
    <property type="term" value="C:membrane"/>
    <property type="evidence" value="ECO:0007669"/>
    <property type="project" value="UniProtKB-SubCell"/>
</dbReference>
<dbReference type="GO" id="GO:0012511">
    <property type="term" value="C:monolayer-surrounded lipid storage body"/>
    <property type="evidence" value="ECO:0007669"/>
    <property type="project" value="InterPro"/>
</dbReference>
<dbReference type="GO" id="GO:0009791">
    <property type="term" value="P:post-embryonic development"/>
    <property type="evidence" value="ECO:0007669"/>
    <property type="project" value="UniProtKB-ARBA"/>
</dbReference>
<dbReference type="GO" id="GO:0048608">
    <property type="term" value="P:reproductive structure development"/>
    <property type="evidence" value="ECO:0007669"/>
    <property type="project" value="UniProtKB-ARBA"/>
</dbReference>
<dbReference type="InterPro" id="IPR000136">
    <property type="entry name" value="Oleosin"/>
</dbReference>
<dbReference type="PANTHER" id="PTHR33203">
    <property type="entry name" value="OLEOSIN"/>
    <property type="match status" value="1"/>
</dbReference>
<dbReference type="PANTHER" id="PTHR33203:SF35">
    <property type="entry name" value="OLEOSIN 14.9 KDA"/>
    <property type="match status" value="1"/>
</dbReference>
<dbReference type="Pfam" id="PF01277">
    <property type="entry name" value="Oleosin"/>
    <property type="match status" value="1"/>
</dbReference>
<dbReference type="PROSITE" id="PS00811">
    <property type="entry name" value="OLEOSINS"/>
    <property type="match status" value="1"/>
</dbReference>
<reference key="1">
    <citation type="journal article" date="1996" name="Plant Mol. Biol.">
        <title>Two new oleosin isoforms with altered expression patterns in seeds of the Arabidopsis mutant fus3.</title>
        <authorList>
            <person name="Kirik V."/>
            <person name="Koelle K."/>
            <person name="Balzer H.-J."/>
            <person name="Baeumlein H."/>
        </authorList>
    </citation>
    <scope>NUCLEOTIDE SEQUENCE [MRNA]</scope>
    <scope>DEVELOPMENTAL STAGE</scope>
    <source>
        <tissue>Silique</tissue>
    </source>
</reference>
<reference key="2">
    <citation type="journal article" date="2000" name="DNA Res.">
        <title>Structural analysis of Arabidopsis thaliana chromosome 5. X. Sequence features of the regions of 3,076,755 bp covered by sixty P1 and TAC clones.</title>
        <authorList>
            <person name="Sato S."/>
            <person name="Nakamura Y."/>
            <person name="Kaneko T."/>
            <person name="Katoh T."/>
            <person name="Asamizu E."/>
            <person name="Kotani H."/>
            <person name="Tabata S."/>
        </authorList>
    </citation>
    <scope>NUCLEOTIDE SEQUENCE [LARGE SCALE GENOMIC DNA]</scope>
    <source>
        <strain>cv. Columbia</strain>
    </source>
</reference>
<reference key="3">
    <citation type="journal article" date="2017" name="Plant J.">
        <title>Araport11: a complete reannotation of the Arabidopsis thaliana reference genome.</title>
        <authorList>
            <person name="Cheng C.Y."/>
            <person name="Krishnakumar V."/>
            <person name="Chan A.P."/>
            <person name="Thibaud-Nissen F."/>
            <person name="Schobel S."/>
            <person name="Town C.D."/>
        </authorList>
    </citation>
    <scope>GENOME REANNOTATION</scope>
    <source>
        <strain>cv. Columbia</strain>
    </source>
</reference>
<reference key="4">
    <citation type="journal article" date="1996" name="Plant J.">
        <title>Further progress towards a catalogue of all Arabidopsis genes: analysis of a set of 5000 non-redundant ESTs.</title>
        <authorList>
            <person name="Cooke R."/>
            <person name="Raynal M."/>
            <person name="Laudie M."/>
            <person name="Grellet F."/>
            <person name="Delseny M."/>
            <person name="Morris P.-C."/>
            <person name="Guerrier D."/>
            <person name="Giraudat J."/>
            <person name="Quigley F."/>
            <person name="Clabault G."/>
            <person name="Li Y.-F."/>
            <person name="Mache R."/>
            <person name="Krivitzky M."/>
            <person name="Gy I.J.-J."/>
            <person name="Kreis M."/>
            <person name="Lecharny A."/>
            <person name="Parmentier Y."/>
            <person name="Marbach J."/>
            <person name="Fleck J."/>
            <person name="Clement B."/>
            <person name="Philipps G."/>
            <person name="Herve C."/>
            <person name="Bardet C."/>
            <person name="Tremousaygue D."/>
            <person name="Lescure B."/>
            <person name="Lacomme C."/>
            <person name="Roby D."/>
            <person name="Jourjon M.-F."/>
            <person name="Chabrier P."/>
            <person name="Charpenteau J.-L."/>
            <person name="Desprez T."/>
            <person name="Amselem J."/>
            <person name="Chiapello H."/>
            <person name="Hoefte H."/>
        </authorList>
    </citation>
    <scope>NUCLEOTIDE SEQUENCE [LARGE SCALE MRNA] OF 1-100</scope>
    <source>
        <strain>cv. Columbia</strain>
        <tissue>Dry seed</tissue>
    </source>
</reference>
<name>OLEO3_ARATH</name>
<gene>
    <name type="primary">OL3</name>
    <name type="ordered locus">At5g51210</name>
    <name type="ORF">MWD22.16</name>
</gene>
<protein>
    <recommendedName>
        <fullName>Oleosin 14.9 kDa</fullName>
    </recommendedName>
</protein>
<feature type="chain" id="PRO_0000108129" description="Oleosin 14.9 kDa">
    <location>
        <begin position="1"/>
        <end position="141"/>
    </location>
</feature>
<feature type="transmembrane region" description="Helical" evidence="2">
    <location>
        <begin position="38"/>
        <end position="58"/>
    </location>
</feature>
<feature type="transmembrane region" description="Helical" evidence="2">
    <location>
        <begin position="60"/>
        <end position="80"/>
    </location>
</feature>
<feature type="transmembrane region" description="Helical" evidence="2">
    <location>
        <begin position="81"/>
        <end position="101"/>
    </location>
</feature>
<feature type="region of interest" description="Polar">
    <location>
        <begin position="1"/>
        <end position="29"/>
    </location>
</feature>
<feature type="region of interest" description="Disordered" evidence="3">
    <location>
        <begin position="1"/>
        <end position="24"/>
    </location>
</feature>
<feature type="region of interest" description="Hydrophobic">
    <location>
        <begin position="30"/>
        <end position="141"/>
    </location>
</feature>
<feature type="compositionally biased region" description="Basic and acidic residues" evidence="3">
    <location>
        <begin position="1"/>
        <end position="22"/>
    </location>
</feature>
<keyword id="KW-0551">Lipid droplet</keyword>
<keyword id="KW-0472">Membrane</keyword>
<keyword id="KW-1185">Reference proteome</keyword>
<keyword id="KW-0812">Transmembrane</keyword>
<keyword id="KW-1133">Transmembrane helix</keyword>